<evidence type="ECO:0000250" key="1"/>
<evidence type="ECO:0000255" key="2"/>
<evidence type="ECO:0000255" key="3">
    <source>
        <dbReference type="PROSITE-ProRule" id="PRU00302"/>
    </source>
</evidence>
<evidence type="ECO:0000255" key="4">
    <source>
        <dbReference type="PROSITE-ProRule" id="PRU00323"/>
    </source>
</evidence>
<evidence type="ECO:0000256" key="5">
    <source>
        <dbReference type="SAM" id="MobiDB-lite"/>
    </source>
</evidence>
<evidence type="ECO:0000269" key="6">
    <source>
    </source>
</evidence>
<evidence type="ECO:0000305" key="7"/>
<protein>
    <recommendedName>
        <fullName>Sushi domain-containing protein 5</fullName>
    </recommendedName>
</protein>
<name>SUSD5_HUMAN</name>
<proteinExistence type="evidence at protein level"/>
<gene>
    <name type="primary">SUSD5</name>
    <name type="synonym">KIAA0527</name>
</gene>
<keyword id="KW-1015">Disulfide bond</keyword>
<keyword id="KW-0472">Membrane</keyword>
<keyword id="KW-1267">Proteomics identification</keyword>
<keyword id="KW-1185">Reference proteome</keyword>
<keyword id="KW-0732">Signal</keyword>
<keyword id="KW-0768">Sushi</keyword>
<keyword id="KW-0812">Transmembrane</keyword>
<keyword id="KW-1133">Transmembrane helix</keyword>
<accession>O60279</accession>
<reference key="1">
    <citation type="journal article" date="1998" name="DNA Res.">
        <title>Prediction of the coding sequences of unidentified human genes. IX. The complete sequences of 100 new cDNA clones from brain which can code for large proteins in vitro.</title>
        <authorList>
            <person name="Nagase T."/>
            <person name="Ishikawa K."/>
            <person name="Miyajima N."/>
            <person name="Tanaka A."/>
            <person name="Kotani H."/>
            <person name="Nomura N."/>
            <person name="Ohara O."/>
        </authorList>
    </citation>
    <scope>NUCLEOTIDE SEQUENCE [LARGE SCALE MRNA]</scope>
    <scope>VARIANTS LEU-40 AND ASP-378</scope>
    <source>
        <tissue>Brain</tissue>
    </source>
</reference>
<reference key="2">
    <citation type="journal article" date="2006" name="Nature">
        <title>The DNA sequence, annotation and analysis of human chromosome 3.</title>
        <authorList>
            <person name="Muzny D.M."/>
            <person name="Scherer S.E."/>
            <person name="Kaul R."/>
            <person name="Wang J."/>
            <person name="Yu J."/>
            <person name="Sudbrak R."/>
            <person name="Buhay C.J."/>
            <person name="Chen R."/>
            <person name="Cree A."/>
            <person name="Ding Y."/>
            <person name="Dugan-Rocha S."/>
            <person name="Gill R."/>
            <person name="Gunaratne P."/>
            <person name="Harris R.A."/>
            <person name="Hawes A.C."/>
            <person name="Hernandez J."/>
            <person name="Hodgson A.V."/>
            <person name="Hume J."/>
            <person name="Jackson A."/>
            <person name="Khan Z.M."/>
            <person name="Kovar-Smith C."/>
            <person name="Lewis L.R."/>
            <person name="Lozado R.J."/>
            <person name="Metzker M.L."/>
            <person name="Milosavljevic A."/>
            <person name="Miner G.R."/>
            <person name="Morgan M.B."/>
            <person name="Nazareth L.V."/>
            <person name="Scott G."/>
            <person name="Sodergren E."/>
            <person name="Song X.-Z."/>
            <person name="Steffen D."/>
            <person name="Wei S."/>
            <person name="Wheeler D.A."/>
            <person name="Wright M.W."/>
            <person name="Worley K.C."/>
            <person name="Yuan Y."/>
            <person name="Zhang Z."/>
            <person name="Adams C.Q."/>
            <person name="Ansari-Lari M.A."/>
            <person name="Ayele M."/>
            <person name="Brown M.J."/>
            <person name="Chen G."/>
            <person name="Chen Z."/>
            <person name="Clendenning J."/>
            <person name="Clerc-Blankenburg K.P."/>
            <person name="Chen R."/>
            <person name="Chen Z."/>
            <person name="Davis C."/>
            <person name="Delgado O."/>
            <person name="Dinh H.H."/>
            <person name="Dong W."/>
            <person name="Draper H."/>
            <person name="Ernst S."/>
            <person name="Fu G."/>
            <person name="Gonzalez-Garay M.L."/>
            <person name="Garcia D.K."/>
            <person name="Gillett W."/>
            <person name="Gu J."/>
            <person name="Hao B."/>
            <person name="Haugen E."/>
            <person name="Havlak P."/>
            <person name="He X."/>
            <person name="Hennig S."/>
            <person name="Hu S."/>
            <person name="Huang W."/>
            <person name="Jackson L.R."/>
            <person name="Jacob L.S."/>
            <person name="Kelly S.H."/>
            <person name="Kube M."/>
            <person name="Levy R."/>
            <person name="Li Z."/>
            <person name="Liu B."/>
            <person name="Liu J."/>
            <person name="Liu W."/>
            <person name="Lu J."/>
            <person name="Maheshwari M."/>
            <person name="Nguyen B.-V."/>
            <person name="Okwuonu G.O."/>
            <person name="Palmeiri A."/>
            <person name="Pasternak S."/>
            <person name="Perez L.M."/>
            <person name="Phelps K.A."/>
            <person name="Plopper F.J."/>
            <person name="Qiang B."/>
            <person name="Raymond C."/>
            <person name="Rodriguez R."/>
            <person name="Saenphimmachak C."/>
            <person name="Santibanez J."/>
            <person name="Shen H."/>
            <person name="Shen Y."/>
            <person name="Subramanian S."/>
            <person name="Tabor P.E."/>
            <person name="Verduzco D."/>
            <person name="Waldron L."/>
            <person name="Wang J."/>
            <person name="Wang J."/>
            <person name="Wang Q."/>
            <person name="Williams G.A."/>
            <person name="Wong G.K.-S."/>
            <person name="Yao Z."/>
            <person name="Zhang J."/>
            <person name="Zhang X."/>
            <person name="Zhao G."/>
            <person name="Zhou J."/>
            <person name="Zhou Y."/>
            <person name="Nelson D."/>
            <person name="Lehrach H."/>
            <person name="Reinhardt R."/>
            <person name="Naylor S.L."/>
            <person name="Yang H."/>
            <person name="Olson M."/>
            <person name="Weinstock G."/>
            <person name="Gibbs R.A."/>
        </authorList>
    </citation>
    <scope>NUCLEOTIDE SEQUENCE [LARGE SCALE GENOMIC DNA]</scope>
</reference>
<reference key="3">
    <citation type="journal article" date="2011" name="BMC Syst. Biol.">
        <title>Initial characterization of the human central proteome.</title>
        <authorList>
            <person name="Burkard T.R."/>
            <person name="Planyavsky M."/>
            <person name="Kaupe I."/>
            <person name="Breitwieser F.P."/>
            <person name="Buerckstuemmer T."/>
            <person name="Bennett K.L."/>
            <person name="Superti-Furga G."/>
            <person name="Colinge J."/>
        </authorList>
    </citation>
    <scope>IDENTIFICATION BY MASS SPECTROMETRY [LARGE SCALE ANALYSIS]</scope>
</reference>
<comment type="subcellular location">
    <subcellularLocation>
        <location>Membrane</location>
        <topology>Single-pass type I membrane protein</topology>
    </subcellularLocation>
</comment>
<comment type="sequence caution" evidence="7">
    <conflict type="erroneous initiation">
        <sequence resource="EMBL-CDS" id="BAA25453"/>
    </conflict>
</comment>
<feature type="signal peptide" evidence="2">
    <location>
        <begin position="1"/>
        <end position="35"/>
    </location>
</feature>
<feature type="chain" id="PRO_0000274247" description="Sushi domain-containing protein 5">
    <location>
        <begin position="36"/>
        <end position="629"/>
    </location>
</feature>
<feature type="topological domain" description="Extracellular" evidence="2">
    <location>
        <begin position="36"/>
        <end position="574"/>
    </location>
</feature>
<feature type="transmembrane region" description="Helical" evidence="2">
    <location>
        <begin position="575"/>
        <end position="595"/>
    </location>
</feature>
<feature type="topological domain" description="Cytoplasmic" evidence="2">
    <location>
        <begin position="596"/>
        <end position="629"/>
    </location>
</feature>
<feature type="domain" description="Link" evidence="4">
    <location>
        <begin position="39"/>
        <end position="134"/>
    </location>
</feature>
<feature type="domain" description="Sushi" evidence="3">
    <location>
        <begin position="138"/>
        <end position="199"/>
    </location>
</feature>
<feature type="region of interest" description="Disordered" evidence="5">
    <location>
        <begin position="225"/>
        <end position="252"/>
    </location>
</feature>
<feature type="region of interest" description="Disordered" evidence="5">
    <location>
        <begin position="344"/>
        <end position="403"/>
    </location>
</feature>
<feature type="compositionally biased region" description="Basic and acidic residues" evidence="5">
    <location>
        <begin position="225"/>
        <end position="249"/>
    </location>
</feature>
<feature type="disulfide bond" evidence="1">
    <location>
        <begin position="61"/>
        <end position="132"/>
    </location>
</feature>
<feature type="disulfide bond" evidence="1">
    <location>
        <begin position="140"/>
        <end position="184"/>
    </location>
</feature>
<feature type="disulfide bond" evidence="1">
    <location>
        <begin position="167"/>
        <end position="197"/>
    </location>
</feature>
<feature type="sequence variant" id="VAR_051391" description="In dbSNP:rs9637517." evidence="6">
    <original>F</original>
    <variation>L</variation>
    <location>
        <position position="40"/>
    </location>
</feature>
<feature type="sequence variant" id="VAR_030217" description="In dbSNP:rs9637517.">
    <original>L</original>
    <variation>F</variation>
    <location>
        <position position="52"/>
    </location>
</feature>
<feature type="sequence variant" id="VAR_051392" description="In dbSNP:rs9872477.">
    <original>R</original>
    <variation>K</variation>
    <location>
        <position position="216"/>
    </location>
</feature>
<feature type="sequence variant" id="VAR_030218" description="In dbSNP:rs9872477.">
    <original>R</original>
    <variation>K</variation>
    <location>
        <position position="228"/>
    </location>
</feature>
<feature type="sequence variant" id="VAR_051393" description="In dbSNP:rs6810039." evidence="6">
    <original>E</original>
    <variation>D</variation>
    <location>
        <position position="378"/>
    </location>
</feature>
<feature type="sequence conflict" description="In Ref. 1; BAA25453." evidence="7" ref="1">
    <original>L</original>
    <variation>S</variation>
    <location>
        <position position="272"/>
    </location>
</feature>
<dbReference type="EMBL" id="AB011099">
    <property type="protein sequence ID" value="BAA25453.1"/>
    <property type="status" value="ALT_INIT"/>
    <property type="molecule type" value="mRNA"/>
</dbReference>
<dbReference type="EMBL" id="AC123900">
    <property type="status" value="NOT_ANNOTATED_CDS"/>
    <property type="molecule type" value="Genomic_DNA"/>
</dbReference>
<dbReference type="CCDS" id="CCDS46787.1"/>
<dbReference type="PIR" id="T00073">
    <property type="entry name" value="T00073"/>
</dbReference>
<dbReference type="RefSeq" id="NP_056366.1">
    <property type="nucleotide sequence ID" value="NM_015551.2"/>
</dbReference>
<dbReference type="SMR" id="O60279"/>
<dbReference type="BioGRID" id="117498">
    <property type="interactions" value="26"/>
</dbReference>
<dbReference type="FunCoup" id="O60279">
    <property type="interactions" value="258"/>
</dbReference>
<dbReference type="IntAct" id="O60279">
    <property type="interactions" value="16"/>
</dbReference>
<dbReference type="MINT" id="O60279"/>
<dbReference type="STRING" id="9606.ENSP00000308727"/>
<dbReference type="GlyCosmos" id="O60279">
    <property type="glycosylation" value="8 sites, 3 glycans"/>
</dbReference>
<dbReference type="GlyGen" id="O60279">
    <property type="glycosylation" value="14 sites, 3 N-linked glycans (3 sites), 4 O-linked glycans (11 sites)"/>
</dbReference>
<dbReference type="iPTMnet" id="O60279"/>
<dbReference type="PhosphoSitePlus" id="O60279"/>
<dbReference type="SwissPalm" id="O60279"/>
<dbReference type="BioMuta" id="SUSD5"/>
<dbReference type="jPOST" id="O60279"/>
<dbReference type="MassIVE" id="O60279"/>
<dbReference type="PaxDb" id="9606-ENSP00000308727"/>
<dbReference type="PeptideAtlas" id="O60279"/>
<dbReference type="ProteomicsDB" id="49308"/>
<dbReference type="Pumba" id="O60279"/>
<dbReference type="Antibodypedia" id="27889">
    <property type="antibodies" value="88 antibodies from 19 providers"/>
</dbReference>
<dbReference type="DNASU" id="26032"/>
<dbReference type="Ensembl" id="ENST00000309558.8">
    <property type="protein sequence ID" value="ENSP00000308727.3"/>
    <property type="gene ID" value="ENSG00000173705.9"/>
</dbReference>
<dbReference type="GeneID" id="26032"/>
<dbReference type="KEGG" id="hsa:26032"/>
<dbReference type="MANE-Select" id="ENST00000309558.8">
    <property type="protein sequence ID" value="ENSP00000308727.3"/>
    <property type="RefSeq nucleotide sequence ID" value="NM_015551.2"/>
    <property type="RefSeq protein sequence ID" value="NP_056366.1"/>
</dbReference>
<dbReference type="UCSC" id="uc003cfo.2">
    <property type="organism name" value="human"/>
</dbReference>
<dbReference type="AGR" id="HGNC:29061"/>
<dbReference type="CTD" id="26032"/>
<dbReference type="DisGeNET" id="26032"/>
<dbReference type="GeneCards" id="SUSD5"/>
<dbReference type="HGNC" id="HGNC:29061">
    <property type="gene designation" value="SUSD5"/>
</dbReference>
<dbReference type="HPA" id="ENSG00000173705">
    <property type="expression patterns" value="Low tissue specificity"/>
</dbReference>
<dbReference type="MIM" id="619917">
    <property type="type" value="gene"/>
</dbReference>
<dbReference type="neXtProt" id="NX_O60279"/>
<dbReference type="OpenTargets" id="ENSG00000173705"/>
<dbReference type="PharmGKB" id="PA143485627"/>
<dbReference type="VEuPathDB" id="HostDB:ENSG00000173705"/>
<dbReference type="eggNOG" id="ENOG502QQ3P">
    <property type="taxonomic scope" value="Eukaryota"/>
</dbReference>
<dbReference type="GeneTree" id="ENSGT00390000009163"/>
<dbReference type="HOGENOM" id="CLU_017358_0_0_1"/>
<dbReference type="InParanoid" id="O60279"/>
<dbReference type="OMA" id="YGQVQAC"/>
<dbReference type="OrthoDB" id="9936131at2759"/>
<dbReference type="PAN-GO" id="O60279">
    <property type="GO annotations" value="1 GO annotation based on evolutionary models"/>
</dbReference>
<dbReference type="PhylomeDB" id="O60279"/>
<dbReference type="TreeFam" id="TF336259"/>
<dbReference type="PathwayCommons" id="O60279"/>
<dbReference type="SignaLink" id="O60279"/>
<dbReference type="BioGRID-ORCS" id="26032">
    <property type="hits" value="9 hits in 1154 CRISPR screens"/>
</dbReference>
<dbReference type="GenomeRNAi" id="26032"/>
<dbReference type="Pharos" id="O60279">
    <property type="development level" value="Tdark"/>
</dbReference>
<dbReference type="PRO" id="PR:O60279"/>
<dbReference type="Proteomes" id="UP000005640">
    <property type="component" value="Chromosome 3"/>
</dbReference>
<dbReference type="RNAct" id="O60279">
    <property type="molecule type" value="protein"/>
</dbReference>
<dbReference type="Bgee" id="ENSG00000173705">
    <property type="expression patterns" value="Expressed in descending thoracic aorta and 154 other cell types or tissues"/>
</dbReference>
<dbReference type="ExpressionAtlas" id="O60279">
    <property type="expression patterns" value="baseline and differential"/>
</dbReference>
<dbReference type="GO" id="GO:0016020">
    <property type="term" value="C:membrane"/>
    <property type="evidence" value="ECO:0007669"/>
    <property type="project" value="UniProtKB-SubCell"/>
</dbReference>
<dbReference type="GO" id="GO:0005540">
    <property type="term" value="F:hyaluronic acid binding"/>
    <property type="evidence" value="ECO:0007669"/>
    <property type="project" value="InterPro"/>
</dbReference>
<dbReference type="GO" id="GO:0007155">
    <property type="term" value="P:cell adhesion"/>
    <property type="evidence" value="ECO:0007669"/>
    <property type="project" value="InterPro"/>
</dbReference>
<dbReference type="GO" id="GO:0007219">
    <property type="term" value="P:Notch signaling pathway"/>
    <property type="evidence" value="ECO:0000318"/>
    <property type="project" value="GO_Central"/>
</dbReference>
<dbReference type="CDD" id="cd00033">
    <property type="entry name" value="CCP"/>
    <property type="match status" value="1"/>
</dbReference>
<dbReference type="CDD" id="cd03521">
    <property type="entry name" value="Link_domain_KIAA0527_like"/>
    <property type="match status" value="1"/>
</dbReference>
<dbReference type="FunFam" id="3.10.100.10:FF:000058">
    <property type="entry name" value="Sushi domain-containing protein 5"/>
    <property type="match status" value="1"/>
</dbReference>
<dbReference type="FunFam" id="2.10.70.10:FF:000050">
    <property type="entry name" value="sushi domain-containing protein 5"/>
    <property type="match status" value="1"/>
</dbReference>
<dbReference type="Gene3D" id="2.10.70.10">
    <property type="entry name" value="Complement Module, domain 1"/>
    <property type="match status" value="1"/>
</dbReference>
<dbReference type="Gene3D" id="3.10.100.10">
    <property type="entry name" value="Mannose-Binding Protein A, subunit A"/>
    <property type="match status" value="1"/>
</dbReference>
<dbReference type="InterPro" id="IPR016186">
    <property type="entry name" value="C-type_lectin-like/link_sf"/>
</dbReference>
<dbReference type="InterPro" id="IPR016187">
    <property type="entry name" value="CTDL_fold"/>
</dbReference>
<dbReference type="InterPro" id="IPR000538">
    <property type="entry name" value="Link_dom"/>
</dbReference>
<dbReference type="InterPro" id="IPR042059">
    <property type="entry name" value="SUSD5_Link_domain"/>
</dbReference>
<dbReference type="InterPro" id="IPR035976">
    <property type="entry name" value="Sushi/SCR/CCP_sf"/>
</dbReference>
<dbReference type="InterPro" id="IPR053298">
    <property type="entry name" value="Sushi_domain_protein"/>
</dbReference>
<dbReference type="InterPro" id="IPR000436">
    <property type="entry name" value="Sushi_SCR_CCP_dom"/>
</dbReference>
<dbReference type="PANTHER" id="PTHR32493">
    <property type="entry name" value="SUSHI DOMAIN-CONTAINING PROTEIN 5"/>
    <property type="match status" value="1"/>
</dbReference>
<dbReference type="PANTHER" id="PTHR32493:SF0">
    <property type="entry name" value="SUSHI DOMAIN-CONTAINING PROTEIN 5"/>
    <property type="match status" value="1"/>
</dbReference>
<dbReference type="Pfam" id="PF00193">
    <property type="entry name" value="Xlink"/>
    <property type="match status" value="1"/>
</dbReference>
<dbReference type="SMART" id="SM00445">
    <property type="entry name" value="LINK"/>
    <property type="match status" value="1"/>
</dbReference>
<dbReference type="SUPFAM" id="SSF56436">
    <property type="entry name" value="C-type lectin-like"/>
    <property type="match status" value="1"/>
</dbReference>
<dbReference type="SUPFAM" id="SSF57535">
    <property type="entry name" value="Complement control module/SCR domain"/>
    <property type="match status" value="1"/>
</dbReference>
<dbReference type="PROSITE" id="PS50963">
    <property type="entry name" value="LINK_2"/>
    <property type="match status" value="1"/>
</dbReference>
<dbReference type="PROSITE" id="PS50923">
    <property type="entry name" value="SUSHI"/>
    <property type="match status" value="1"/>
</dbReference>
<organism>
    <name type="scientific">Homo sapiens</name>
    <name type="common">Human</name>
    <dbReference type="NCBI Taxonomy" id="9606"/>
    <lineage>
        <taxon>Eukaryota</taxon>
        <taxon>Metazoa</taxon>
        <taxon>Chordata</taxon>
        <taxon>Craniata</taxon>
        <taxon>Vertebrata</taxon>
        <taxon>Euteleostomi</taxon>
        <taxon>Mammalia</taxon>
        <taxon>Eutheria</taxon>
        <taxon>Euarchontoglires</taxon>
        <taxon>Primates</taxon>
        <taxon>Haplorrhini</taxon>
        <taxon>Catarrhini</taxon>
        <taxon>Hominidae</taxon>
        <taxon>Homo</taxon>
    </lineage>
</organism>
<sequence>MTAEGPSPPARWHRRLPGLWAAALLLLGLPRLSVRADGKFFVLESQNGSQGLQLEAARLSCKSRGAHLASADELRRVVQDCSFAVCTTGWLADGTLGTTVCSKGSGEQQIMRAVDVRIESNPVPGGTYSALCIKDEEKPCGDPPSFPHTILQGRTGLEMGDELLYVCAPGHIMGHRETAFTLLCNSCGEWYGLVQACGKDEAEAHIDYEDNFPDDRSVSFRELMEDSRTEADEDRGQGDSSEEAPKQDRLVSISVGRENIARDKVFVPTTGLPGAGSSVPADSPGSRLLQKHLFWFPAEAFHKPGLEKEVDDDTKKQFSAGDNHSGVKLVPGEPETKVIYGNTDGPSGPFVGKNDSKAGDPVVSSSDESWLDGYPVTEGAWRKTEAEEEEDGDRGDGSVGLDENVLVTPDQPILVEVKKPKSSTLTPSEGMTHSSVLPSQMLDVEALALRPVNASETEGIGDGDLTKYQSTLPWRFITEESPMATLSYELTSSTLEILTVNTVKQTPNHIPSTIMATTQPPVETTVPEIQDSFPYLLSEDFFGQEGPGPGASEELHPTLESCVGDGCPGLSRGPVIATIVTVLCLLLLLAGVGMVWGYRKCQHKSSVYKLNVGQRQARHYHQQIEMEKV</sequence>